<sequence>MYALIEYKGKQYKAEKGAKLVVDKLSAESGSKIDIDTVLLISDGDKVTVGTPYVSGAKVSATVGDSFRERKIIVYKHKAKKNYHRTQGHRQAHTCITVDNIVG</sequence>
<accession>Q73LW1</accession>
<feature type="chain" id="PRO_0000270742" description="Large ribosomal subunit protein bL21">
    <location>
        <begin position="1"/>
        <end position="103"/>
    </location>
</feature>
<keyword id="KW-1185">Reference proteome</keyword>
<keyword id="KW-0687">Ribonucleoprotein</keyword>
<keyword id="KW-0689">Ribosomal protein</keyword>
<keyword id="KW-0694">RNA-binding</keyword>
<keyword id="KW-0699">rRNA-binding</keyword>
<protein>
    <recommendedName>
        <fullName evidence="1">Large ribosomal subunit protein bL21</fullName>
    </recommendedName>
    <alternativeName>
        <fullName evidence="2">50S ribosomal protein L21</fullName>
    </alternativeName>
</protein>
<reference key="1">
    <citation type="journal article" date="2004" name="Proc. Natl. Acad. Sci. U.S.A.">
        <title>Comparison of the genome of the oral pathogen Treponema denticola with other spirochete genomes.</title>
        <authorList>
            <person name="Seshadri R."/>
            <person name="Myers G.S.A."/>
            <person name="Tettelin H."/>
            <person name="Eisen J.A."/>
            <person name="Heidelberg J.F."/>
            <person name="Dodson R.J."/>
            <person name="Davidsen T.M."/>
            <person name="DeBoy R.T."/>
            <person name="Fouts D.E."/>
            <person name="Haft D.H."/>
            <person name="Selengut J."/>
            <person name="Ren Q."/>
            <person name="Brinkac L.M."/>
            <person name="Madupu R."/>
            <person name="Kolonay J.F."/>
            <person name="Durkin S.A."/>
            <person name="Daugherty S.C."/>
            <person name="Shetty J."/>
            <person name="Shvartsbeyn A."/>
            <person name="Gebregeorgis E."/>
            <person name="Geer K."/>
            <person name="Tsegaye G."/>
            <person name="Malek J.A."/>
            <person name="Ayodeji B."/>
            <person name="Shatsman S."/>
            <person name="McLeod M.P."/>
            <person name="Smajs D."/>
            <person name="Howell J.K."/>
            <person name="Pal S."/>
            <person name="Amin A."/>
            <person name="Vashisth P."/>
            <person name="McNeill T.Z."/>
            <person name="Xiang Q."/>
            <person name="Sodergren E."/>
            <person name="Baca E."/>
            <person name="Weinstock G.M."/>
            <person name="Norris S.J."/>
            <person name="Fraser C.M."/>
            <person name="Paulsen I.T."/>
        </authorList>
    </citation>
    <scope>NUCLEOTIDE SEQUENCE [LARGE SCALE GENOMIC DNA]</scope>
    <source>
        <strain>ATCC 35405 / DSM 14222 / CIP 103919 / JCM 8153 / KCTC 15104</strain>
    </source>
</reference>
<gene>
    <name evidence="1" type="primary">rplU</name>
    <name type="ordered locus">TDE_1751</name>
</gene>
<dbReference type="EMBL" id="AE017226">
    <property type="protein sequence ID" value="AAS12266.1"/>
    <property type="molecule type" value="Genomic_DNA"/>
</dbReference>
<dbReference type="RefSeq" id="NP_972355.1">
    <property type="nucleotide sequence ID" value="NC_002967.9"/>
</dbReference>
<dbReference type="RefSeq" id="WP_002669481.1">
    <property type="nucleotide sequence ID" value="NC_002967.9"/>
</dbReference>
<dbReference type="SMR" id="Q73LW1"/>
<dbReference type="STRING" id="243275.TDE_1751"/>
<dbReference type="PaxDb" id="243275-TDE_1751"/>
<dbReference type="GeneID" id="2740596"/>
<dbReference type="KEGG" id="tde:TDE_1751"/>
<dbReference type="PATRIC" id="fig|243275.7.peg.1674"/>
<dbReference type="eggNOG" id="COG0261">
    <property type="taxonomic scope" value="Bacteria"/>
</dbReference>
<dbReference type="HOGENOM" id="CLU_061463_3_3_12"/>
<dbReference type="OrthoDB" id="9813334at2"/>
<dbReference type="Proteomes" id="UP000008212">
    <property type="component" value="Chromosome"/>
</dbReference>
<dbReference type="GO" id="GO:0005737">
    <property type="term" value="C:cytoplasm"/>
    <property type="evidence" value="ECO:0007669"/>
    <property type="project" value="UniProtKB-ARBA"/>
</dbReference>
<dbReference type="GO" id="GO:1990904">
    <property type="term" value="C:ribonucleoprotein complex"/>
    <property type="evidence" value="ECO:0007669"/>
    <property type="project" value="UniProtKB-KW"/>
</dbReference>
<dbReference type="GO" id="GO:0005840">
    <property type="term" value="C:ribosome"/>
    <property type="evidence" value="ECO:0007669"/>
    <property type="project" value="UniProtKB-KW"/>
</dbReference>
<dbReference type="GO" id="GO:0019843">
    <property type="term" value="F:rRNA binding"/>
    <property type="evidence" value="ECO:0007669"/>
    <property type="project" value="UniProtKB-UniRule"/>
</dbReference>
<dbReference type="GO" id="GO:0003735">
    <property type="term" value="F:structural constituent of ribosome"/>
    <property type="evidence" value="ECO:0007669"/>
    <property type="project" value="InterPro"/>
</dbReference>
<dbReference type="GO" id="GO:0006412">
    <property type="term" value="P:translation"/>
    <property type="evidence" value="ECO:0007669"/>
    <property type="project" value="UniProtKB-UniRule"/>
</dbReference>
<dbReference type="HAMAP" id="MF_01363">
    <property type="entry name" value="Ribosomal_bL21"/>
    <property type="match status" value="1"/>
</dbReference>
<dbReference type="InterPro" id="IPR028909">
    <property type="entry name" value="bL21-like"/>
</dbReference>
<dbReference type="InterPro" id="IPR036164">
    <property type="entry name" value="bL21-like_sf"/>
</dbReference>
<dbReference type="InterPro" id="IPR001787">
    <property type="entry name" value="Ribosomal_bL21"/>
</dbReference>
<dbReference type="InterPro" id="IPR018258">
    <property type="entry name" value="Ribosomal_bL21_CS"/>
</dbReference>
<dbReference type="NCBIfam" id="TIGR00061">
    <property type="entry name" value="L21"/>
    <property type="match status" value="1"/>
</dbReference>
<dbReference type="PANTHER" id="PTHR21349">
    <property type="entry name" value="50S RIBOSOMAL PROTEIN L21"/>
    <property type="match status" value="1"/>
</dbReference>
<dbReference type="PANTHER" id="PTHR21349:SF0">
    <property type="entry name" value="LARGE RIBOSOMAL SUBUNIT PROTEIN BL21M"/>
    <property type="match status" value="1"/>
</dbReference>
<dbReference type="Pfam" id="PF00829">
    <property type="entry name" value="Ribosomal_L21p"/>
    <property type="match status" value="1"/>
</dbReference>
<dbReference type="SUPFAM" id="SSF141091">
    <property type="entry name" value="L21p-like"/>
    <property type="match status" value="1"/>
</dbReference>
<dbReference type="PROSITE" id="PS01169">
    <property type="entry name" value="RIBOSOMAL_L21"/>
    <property type="match status" value="1"/>
</dbReference>
<proteinExistence type="inferred from homology"/>
<comment type="function">
    <text evidence="1">This protein binds to 23S rRNA in the presence of protein L20.</text>
</comment>
<comment type="subunit">
    <text evidence="1">Part of the 50S ribosomal subunit. Contacts protein L20.</text>
</comment>
<comment type="similarity">
    <text evidence="1">Belongs to the bacterial ribosomal protein bL21 family.</text>
</comment>
<evidence type="ECO:0000255" key="1">
    <source>
        <dbReference type="HAMAP-Rule" id="MF_01363"/>
    </source>
</evidence>
<evidence type="ECO:0000305" key="2"/>
<organism>
    <name type="scientific">Treponema denticola (strain ATCC 35405 / DSM 14222 / CIP 103919 / JCM 8153 / KCTC 15104)</name>
    <dbReference type="NCBI Taxonomy" id="243275"/>
    <lineage>
        <taxon>Bacteria</taxon>
        <taxon>Pseudomonadati</taxon>
        <taxon>Spirochaetota</taxon>
        <taxon>Spirochaetia</taxon>
        <taxon>Spirochaetales</taxon>
        <taxon>Treponemataceae</taxon>
        <taxon>Treponema</taxon>
    </lineage>
</organism>
<name>RL21_TREDE</name>